<evidence type="ECO:0000250" key="1"/>
<evidence type="ECO:0000255" key="2">
    <source>
        <dbReference type="HAMAP-Rule" id="MF_01109"/>
    </source>
</evidence>
<name>OTC_CHRSD</name>
<keyword id="KW-0028">Amino-acid biosynthesis</keyword>
<keyword id="KW-0055">Arginine biosynthesis</keyword>
<keyword id="KW-0963">Cytoplasm</keyword>
<keyword id="KW-1185">Reference proteome</keyword>
<keyword id="KW-0808">Transferase</keyword>
<protein>
    <recommendedName>
        <fullName evidence="2">Ornithine carbamoyltransferase</fullName>
        <shortName evidence="2">OTCase</shortName>
        <ecNumber evidence="2">2.1.3.3</ecNumber>
    </recommendedName>
</protein>
<accession>Q1QVM7</accession>
<reference key="1">
    <citation type="journal article" date="2011" name="Stand. Genomic Sci.">
        <title>Complete genome sequence of the halophilic and highly halotolerant Chromohalobacter salexigens type strain (1H11(T)).</title>
        <authorList>
            <person name="Copeland A."/>
            <person name="O'Connor K."/>
            <person name="Lucas S."/>
            <person name="Lapidus A."/>
            <person name="Berry K.W."/>
            <person name="Detter J.C."/>
            <person name="Del Rio T.G."/>
            <person name="Hammon N."/>
            <person name="Dalin E."/>
            <person name="Tice H."/>
            <person name="Pitluck S."/>
            <person name="Bruce D."/>
            <person name="Goodwin L."/>
            <person name="Han C."/>
            <person name="Tapia R."/>
            <person name="Saunders E."/>
            <person name="Schmutz J."/>
            <person name="Brettin T."/>
            <person name="Larimer F."/>
            <person name="Land M."/>
            <person name="Hauser L."/>
            <person name="Vargas C."/>
            <person name="Nieto J.J."/>
            <person name="Kyrpides N.C."/>
            <person name="Ivanova N."/>
            <person name="Goker M."/>
            <person name="Klenk H.P."/>
            <person name="Csonka L.N."/>
            <person name="Woyke T."/>
        </authorList>
    </citation>
    <scope>NUCLEOTIDE SEQUENCE [LARGE SCALE GENOMIC DNA]</scope>
    <source>
        <strain>ATCC BAA-138 / DSM 3043 / CIP 106854 / NCIMB 13768 / 1H11</strain>
    </source>
</reference>
<comment type="function">
    <text evidence="1">Reversibly catalyzes the transfer of the carbamoyl group from carbamoyl phosphate (CP) to the N(epsilon) atom of ornithine (ORN) to produce L-citrulline.</text>
</comment>
<comment type="catalytic activity">
    <reaction evidence="2">
        <text>carbamoyl phosphate + L-ornithine = L-citrulline + phosphate + H(+)</text>
        <dbReference type="Rhea" id="RHEA:19513"/>
        <dbReference type="ChEBI" id="CHEBI:15378"/>
        <dbReference type="ChEBI" id="CHEBI:43474"/>
        <dbReference type="ChEBI" id="CHEBI:46911"/>
        <dbReference type="ChEBI" id="CHEBI:57743"/>
        <dbReference type="ChEBI" id="CHEBI:58228"/>
        <dbReference type="EC" id="2.1.3.3"/>
    </reaction>
</comment>
<comment type="pathway">
    <text evidence="2">Amino-acid biosynthesis; L-arginine biosynthesis; L-arginine from L-ornithine and carbamoyl phosphate: step 1/3.</text>
</comment>
<comment type="subcellular location">
    <subcellularLocation>
        <location evidence="2">Cytoplasm</location>
    </subcellularLocation>
</comment>
<comment type="similarity">
    <text evidence="2">Belongs to the aspartate/ornithine carbamoyltransferase superfamily. OTCase family.</text>
</comment>
<organism>
    <name type="scientific">Chromohalobacter salexigens (strain ATCC BAA-138 / DSM 3043 / CIP 106854 / NCIMB 13768 / 1H11)</name>
    <dbReference type="NCBI Taxonomy" id="290398"/>
    <lineage>
        <taxon>Bacteria</taxon>
        <taxon>Pseudomonadati</taxon>
        <taxon>Pseudomonadota</taxon>
        <taxon>Gammaproteobacteria</taxon>
        <taxon>Oceanospirillales</taxon>
        <taxon>Halomonadaceae</taxon>
        <taxon>Chromohalobacter</taxon>
    </lineage>
</organism>
<proteinExistence type="inferred from homology"/>
<sequence length="305" mass="33953">MATRHFLTLLDLTPEELSHLIQRAITIKNRLKAQGPTYTPFSNRTLAMFFEKSSTRTRVSFETAMAHFGGHALFLSPRDTQLGRGEPIGDTARVLAEMVDIVMIRTFSHAGLEEYAAASAVPVINALTDDYHPCQLLADVMTWTECRGSVKGKTAVWIGDGNNMCHSWINAARQFDFRLRVCCPPGYEPDADIVAAAGERVEILHDPRQAVQGADLVTTDVWASMGQEEEQARRERDFAGFQVTEKLLDHAADNVLFLHCLPAHRGEEISTTLLDDPRAAVWQEAGNRLHAQKALIEFLLLGKVE</sequence>
<dbReference type="EC" id="2.1.3.3" evidence="2"/>
<dbReference type="EMBL" id="CP000285">
    <property type="protein sequence ID" value="ABE59481.1"/>
    <property type="molecule type" value="Genomic_DNA"/>
</dbReference>
<dbReference type="RefSeq" id="WP_011507427.1">
    <property type="nucleotide sequence ID" value="NC_007963.1"/>
</dbReference>
<dbReference type="SMR" id="Q1QVM7"/>
<dbReference type="STRING" id="290398.Csal_2130"/>
<dbReference type="GeneID" id="95334846"/>
<dbReference type="KEGG" id="csa:Csal_2130"/>
<dbReference type="eggNOG" id="COG0078">
    <property type="taxonomic scope" value="Bacteria"/>
</dbReference>
<dbReference type="HOGENOM" id="CLU_043846_3_2_6"/>
<dbReference type="OrthoDB" id="9802587at2"/>
<dbReference type="UniPathway" id="UPA00068">
    <property type="reaction ID" value="UER00112"/>
</dbReference>
<dbReference type="Proteomes" id="UP000000239">
    <property type="component" value="Chromosome"/>
</dbReference>
<dbReference type="GO" id="GO:0005737">
    <property type="term" value="C:cytoplasm"/>
    <property type="evidence" value="ECO:0007669"/>
    <property type="project" value="UniProtKB-SubCell"/>
</dbReference>
<dbReference type="GO" id="GO:0016597">
    <property type="term" value="F:amino acid binding"/>
    <property type="evidence" value="ECO:0007669"/>
    <property type="project" value="InterPro"/>
</dbReference>
<dbReference type="GO" id="GO:0004585">
    <property type="term" value="F:ornithine carbamoyltransferase activity"/>
    <property type="evidence" value="ECO:0007669"/>
    <property type="project" value="UniProtKB-UniRule"/>
</dbReference>
<dbReference type="GO" id="GO:0042450">
    <property type="term" value="P:arginine biosynthetic process via ornithine"/>
    <property type="evidence" value="ECO:0007669"/>
    <property type="project" value="TreeGrafter"/>
</dbReference>
<dbReference type="GO" id="GO:0019240">
    <property type="term" value="P:citrulline biosynthetic process"/>
    <property type="evidence" value="ECO:0007669"/>
    <property type="project" value="TreeGrafter"/>
</dbReference>
<dbReference type="GO" id="GO:0006526">
    <property type="term" value="P:L-arginine biosynthetic process"/>
    <property type="evidence" value="ECO:0007669"/>
    <property type="project" value="UniProtKB-UniRule"/>
</dbReference>
<dbReference type="FunFam" id="3.40.50.1370:FF:000008">
    <property type="entry name" value="Ornithine carbamoyltransferase"/>
    <property type="match status" value="1"/>
</dbReference>
<dbReference type="Gene3D" id="3.40.50.1370">
    <property type="entry name" value="Aspartate/ornithine carbamoyltransferase"/>
    <property type="match status" value="2"/>
</dbReference>
<dbReference type="HAMAP" id="MF_01109">
    <property type="entry name" value="OTCase"/>
    <property type="match status" value="1"/>
</dbReference>
<dbReference type="InterPro" id="IPR006132">
    <property type="entry name" value="Asp/Orn_carbamoyltranf_P-bd"/>
</dbReference>
<dbReference type="InterPro" id="IPR006130">
    <property type="entry name" value="Asp/Orn_carbamoylTrfase"/>
</dbReference>
<dbReference type="InterPro" id="IPR036901">
    <property type="entry name" value="Asp/Orn_carbamoylTrfase_sf"/>
</dbReference>
<dbReference type="InterPro" id="IPR006131">
    <property type="entry name" value="Asp_carbamoyltransf_Asp/Orn-bd"/>
</dbReference>
<dbReference type="InterPro" id="IPR002292">
    <property type="entry name" value="Orn/put_carbamltrans"/>
</dbReference>
<dbReference type="InterPro" id="IPR024904">
    <property type="entry name" value="OTCase_ArgI"/>
</dbReference>
<dbReference type="NCBIfam" id="TIGR00658">
    <property type="entry name" value="orni_carb_tr"/>
    <property type="match status" value="1"/>
</dbReference>
<dbReference type="NCBIfam" id="NF001986">
    <property type="entry name" value="PRK00779.1"/>
    <property type="match status" value="1"/>
</dbReference>
<dbReference type="PANTHER" id="PTHR45753">
    <property type="entry name" value="ORNITHINE CARBAMOYLTRANSFERASE, MITOCHONDRIAL"/>
    <property type="match status" value="1"/>
</dbReference>
<dbReference type="PANTHER" id="PTHR45753:SF3">
    <property type="entry name" value="ORNITHINE TRANSCARBAMYLASE, MITOCHONDRIAL"/>
    <property type="match status" value="1"/>
</dbReference>
<dbReference type="Pfam" id="PF00185">
    <property type="entry name" value="OTCace"/>
    <property type="match status" value="1"/>
</dbReference>
<dbReference type="Pfam" id="PF02729">
    <property type="entry name" value="OTCace_N"/>
    <property type="match status" value="1"/>
</dbReference>
<dbReference type="PRINTS" id="PR00100">
    <property type="entry name" value="AOTCASE"/>
</dbReference>
<dbReference type="PRINTS" id="PR00102">
    <property type="entry name" value="OTCASE"/>
</dbReference>
<dbReference type="SUPFAM" id="SSF53671">
    <property type="entry name" value="Aspartate/ornithine carbamoyltransferase"/>
    <property type="match status" value="1"/>
</dbReference>
<dbReference type="PROSITE" id="PS00097">
    <property type="entry name" value="CARBAMOYLTRANSFERASE"/>
    <property type="match status" value="1"/>
</dbReference>
<gene>
    <name evidence="2" type="primary">argF</name>
    <name type="ordered locus">Csal_2130</name>
</gene>
<feature type="chain" id="PRO_1000065086" description="Ornithine carbamoyltransferase">
    <location>
        <begin position="1"/>
        <end position="305"/>
    </location>
</feature>
<feature type="binding site" evidence="2">
    <location>
        <begin position="54"/>
        <end position="57"/>
    </location>
    <ligand>
        <name>carbamoyl phosphate</name>
        <dbReference type="ChEBI" id="CHEBI:58228"/>
    </ligand>
</feature>
<feature type="binding site" evidence="2">
    <location>
        <position position="81"/>
    </location>
    <ligand>
        <name>carbamoyl phosphate</name>
        <dbReference type="ChEBI" id="CHEBI:58228"/>
    </ligand>
</feature>
<feature type="binding site" evidence="2">
    <location>
        <position position="105"/>
    </location>
    <ligand>
        <name>carbamoyl phosphate</name>
        <dbReference type="ChEBI" id="CHEBI:58228"/>
    </ligand>
</feature>
<feature type="binding site" evidence="2">
    <location>
        <begin position="132"/>
        <end position="135"/>
    </location>
    <ligand>
        <name>carbamoyl phosphate</name>
        <dbReference type="ChEBI" id="CHEBI:58228"/>
    </ligand>
</feature>
<feature type="binding site" evidence="2">
    <location>
        <position position="163"/>
    </location>
    <ligand>
        <name>L-ornithine</name>
        <dbReference type="ChEBI" id="CHEBI:46911"/>
    </ligand>
</feature>
<feature type="binding site" evidence="2">
    <location>
        <position position="220"/>
    </location>
    <ligand>
        <name>L-ornithine</name>
        <dbReference type="ChEBI" id="CHEBI:46911"/>
    </ligand>
</feature>
<feature type="binding site" evidence="2">
    <location>
        <begin position="224"/>
        <end position="225"/>
    </location>
    <ligand>
        <name>L-ornithine</name>
        <dbReference type="ChEBI" id="CHEBI:46911"/>
    </ligand>
</feature>
<feature type="binding site" evidence="2">
    <location>
        <begin position="260"/>
        <end position="261"/>
    </location>
    <ligand>
        <name>carbamoyl phosphate</name>
        <dbReference type="ChEBI" id="CHEBI:58228"/>
    </ligand>
</feature>
<feature type="binding site" evidence="2">
    <location>
        <position position="288"/>
    </location>
    <ligand>
        <name>carbamoyl phosphate</name>
        <dbReference type="ChEBI" id="CHEBI:58228"/>
    </ligand>
</feature>